<proteinExistence type="inferred from homology"/>
<protein>
    <recommendedName>
        <fullName>Probable glucan endo-1,3-beta-glucosidase btgC</fullName>
        <ecNumber>3.2.1.39</ecNumber>
    </recommendedName>
    <alternativeName>
        <fullName>Endo-1,3-beta-glucanase btgC</fullName>
    </alternativeName>
    <alternativeName>
        <fullName>Laminarinase btgC</fullName>
    </alternativeName>
</protein>
<keyword id="KW-0119">Carbohydrate metabolism</keyword>
<keyword id="KW-1003">Cell membrane</keyword>
<keyword id="KW-0961">Cell wall biogenesis/degradation</keyword>
<keyword id="KW-0325">Glycoprotein</keyword>
<keyword id="KW-0378">Hydrolase</keyword>
<keyword id="KW-0472">Membrane</keyword>
<keyword id="KW-0624">Polysaccharide degradation</keyword>
<keyword id="KW-1185">Reference proteome</keyword>
<keyword id="KW-0735">Signal-anchor</keyword>
<keyword id="KW-0812">Transmembrane</keyword>
<keyword id="KW-1133">Transmembrane helix</keyword>
<evidence type="ECO:0000250" key="1"/>
<evidence type="ECO:0000250" key="2">
    <source>
        <dbReference type="UniProtKB" id="O22317"/>
    </source>
</evidence>
<evidence type="ECO:0000255" key="3"/>
<evidence type="ECO:0000256" key="4">
    <source>
        <dbReference type="SAM" id="MobiDB-lite"/>
    </source>
</evidence>
<evidence type="ECO:0000305" key="5"/>
<accession>Q0CI96</accession>
<name>BTGC_ASPTN</name>
<feature type="chain" id="PRO_0000395127" description="Probable glucan endo-1,3-beta-glucosidase btgC">
    <location>
        <begin position="1"/>
        <end position="655"/>
    </location>
</feature>
<feature type="topological domain" description="Cytoplasmic" evidence="3">
    <location>
        <begin position="1"/>
        <end position="282"/>
    </location>
</feature>
<feature type="transmembrane region" description="Helical; Signal-anchor for type II membrane protein" evidence="3">
    <location>
        <begin position="283"/>
        <end position="303"/>
    </location>
</feature>
<feature type="topological domain" description="Extracellular" evidence="3">
    <location>
        <begin position="304"/>
        <end position="655"/>
    </location>
</feature>
<feature type="region of interest" description="Disordered" evidence="4">
    <location>
        <begin position="1"/>
        <end position="61"/>
    </location>
</feature>
<feature type="region of interest" description="Disordered" evidence="4">
    <location>
        <begin position="89"/>
        <end position="114"/>
    </location>
</feature>
<feature type="region of interest" description="Disordered" evidence="4">
    <location>
        <begin position="305"/>
        <end position="338"/>
    </location>
</feature>
<feature type="compositionally biased region" description="Polar residues" evidence="4">
    <location>
        <begin position="19"/>
        <end position="33"/>
    </location>
</feature>
<feature type="compositionally biased region" description="Basic and acidic residues" evidence="4">
    <location>
        <begin position="89"/>
        <end position="98"/>
    </location>
</feature>
<feature type="compositionally biased region" description="Basic and acidic residues" evidence="4">
    <location>
        <begin position="323"/>
        <end position="338"/>
    </location>
</feature>
<feature type="active site" description="Proton donor" evidence="2">
    <location>
        <position position="458"/>
    </location>
</feature>
<feature type="active site" description="Nucleophile" evidence="2">
    <location>
        <position position="557"/>
    </location>
</feature>
<feature type="glycosylation site" description="N-linked (GlcNAc...) asparagine" evidence="3">
    <location>
        <position position="426"/>
    </location>
</feature>
<feature type="glycosylation site" description="N-linked (GlcNAc...) asparagine" evidence="3">
    <location>
        <position position="576"/>
    </location>
</feature>
<feature type="glycosylation site" description="N-linked (GlcNAc...) asparagine" evidence="3">
    <location>
        <position position="602"/>
    </location>
</feature>
<dbReference type="EC" id="3.2.1.39"/>
<dbReference type="EMBL" id="CH476602">
    <property type="protein sequence ID" value="EAU33132.1"/>
    <property type="status" value="ALT_SEQ"/>
    <property type="molecule type" value="Genomic_DNA"/>
</dbReference>
<dbReference type="RefSeq" id="XP_001215766.1">
    <property type="nucleotide sequence ID" value="XM_001215766.1"/>
</dbReference>
<dbReference type="SMR" id="Q0CI96"/>
<dbReference type="STRING" id="341663.Q0CI96"/>
<dbReference type="GlyCosmos" id="Q0CI96">
    <property type="glycosylation" value="3 sites, No reported glycans"/>
</dbReference>
<dbReference type="EnsemblFungi" id="EAU33132">
    <property type="protein sequence ID" value="EAU33132"/>
    <property type="gene ID" value="ATEG_06588"/>
</dbReference>
<dbReference type="GeneID" id="4322381"/>
<dbReference type="eggNOG" id="ENOG502QTKT">
    <property type="taxonomic scope" value="Eukaryota"/>
</dbReference>
<dbReference type="OrthoDB" id="68336at2759"/>
<dbReference type="Proteomes" id="UP000007963">
    <property type="component" value="Unassembled WGS sequence"/>
</dbReference>
<dbReference type="GO" id="GO:0009986">
    <property type="term" value="C:cell surface"/>
    <property type="evidence" value="ECO:0007669"/>
    <property type="project" value="TreeGrafter"/>
</dbReference>
<dbReference type="GO" id="GO:0005576">
    <property type="term" value="C:extracellular region"/>
    <property type="evidence" value="ECO:0007669"/>
    <property type="project" value="TreeGrafter"/>
</dbReference>
<dbReference type="GO" id="GO:0009277">
    <property type="term" value="C:fungal-type cell wall"/>
    <property type="evidence" value="ECO:0007669"/>
    <property type="project" value="TreeGrafter"/>
</dbReference>
<dbReference type="GO" id="GO:0005886">
    <property type="term" value="C:plasma membrane"/>
    <property type="evidence" value="ECO:0007669"/>
    <property type="project" value="UniProtKB-SubCell"/>
</dbReference>
<dbReference type="GO" id="GO:0042973">
    <property type="term" value="F:glucan endo-1,3-beta-D-glucosidase activity"/>
    <property type="evidence" value="ECO:0007669"/>
    <property type="project" value="UniProtKB-EC"/>
</dbReference>
<dbReference type="GO" id="GO:0071555">
    <property type="term" value="P:cell wall organization"/>
    <property type="evidence" value="ECO:0007669"/>
    <property type="project" value="UniProtKB-KW"/>
</dbReference>
<dbReference type="GO" id="GO:0000272">
    <property type="term" value="P:polysaccharide catabolic process"/>
    <property type="evidence" value="ECO:0007669"/>
    <property type="project" value="UniProtKB-KW"/>
</dbReference>
<dbReference type="FunFam" id="3.20.20.80:FF:000151">
    <property type="entry name" value="Glucan endo-1,3-beta-glucosidase btgC"/>
    <property type="match status" value="1"/>
</dbReference>
<dbReference type="Gene3D" id="3.20.20.80">
    <property type="entry name" value="Glycosidases"/>
    <property type="match status" value="1"/>
</dbReference>
<dbReference type="InterPro" id="IPR050732">
    <property type="entry name" value="Beta-glucan_modifiers"/>
</dbReference>
<dbReference type="InterPro" id="IPR017853">
    <property type="entry name" value="Glycoside_hydrolase_SF"/>
</dbReference>
<dbReference type="PANTHER" id="PTHR16631">
    <property type="entry name" value="GLUCAN 1,3-BETA-GLUCOSIDASE"/>
    <property type="match status" value="1"/>
</dbReference>
<dbReference type="PANTHER" id="PTHR16631:SF17">
    <property type="entry name" value="GLUCAN ENDO-1,3-BETA-GLUCOSIDASE BTGC"/>
    <property type="match status" value="1"/>
</dbReference>
<dbReference type="SUPFAM" id="SSF51445">
    <property type="entry name" value="(Trans)glycosidases"/>
    <property type="match status" value="1"/>
</dbReference>
<organism>
    <name type="scientific">Aspergillus terreus (strain NIH 2624 / FGSC A1156)</name>
    <dbReference type="NCBI Taxonomy" id="341663"/>
    <lineage>
        <taxon>Eukaryota</taxon>
        <taxon>Fungi</taxon>
        <taxon>Dikarya</taxon>
        <taxon>Ascomycota</taxon>
        <taxon>Pezizomycotina</taxon>
        <taxon>Eurotiomycetes</taxon>
        <taxon>Eurotiomycetidae</taxon>
        <taxon>Eurotiales</taxon>
        <taxon>Aspergillaceae</taxon>
        <taxon>Aspergillus</taxon>
        <taxon>Aspergillus subgen. Circumdati</taxon>
    </lineage>
</organism>
<gene>
    <name type="primary">btgC</name>
    <name type="ORF">ATEG_06588</name>
</gene>
<comment type="function">
    <text evidence="1">Glucanases play a role in cell expansion during growth, in cell-cell fusion during mating, and in spore release during sporulation. This enzyme may be involved in beta-glucan degradation. Active on laminarin and lichenan (By similarity).</text>
</comment>
<comment type="catalytic activity">
    <reaction>
        <text>Hydrolysis of (1-&gt;3)-beta-D-glucosidic linkages in (1-&gt;3)-beta-D-glucans.</text>
        <dbReference type="EC" id="3.2.1.39"/>
    </reaction>
</comment>
<comment type="subcellular location">
    <subcellularLocation>
        <location evidence="1">Cell membrane</location>
        <topology evidence="1">Single-pass type II membrane protein</topology>
    </subcellularLocation>
</comment>
<comment type="similarity">
    <text evidence="5">Belongs to the glycosyl hydrolase 17 family.</text>
</comment>
<comment type="sequence caution" evidence="5">
    <conflict type="erroneous gene model prediction">
        <sequence resource="EMBL-CDS" id="EAU33132"/>
    </conflict>
</comment>
<comment type="sequence caution" evidence="5">
    <conflict type="erroneous initiation">
        <sequence resource="EMBL-CDS" id="EAU33132"/>
    </conflict>
    <text>Truncated N-terminus.</text>
</comment>
<reference key="1">
    <citation type="submission" date="2005-09" db="EMBL/GenBank/DDBJ databases">
        <title>Annotation of the Aspergillus terreus NIH2624 genome.</title>
        <authorList>
            <person name="Birren B.W."/>
            <person name="Lander E.S."/>
            <person name="Galagan J.E."/>
            <person name="Nusbaum C."/>
            <person name="Devon K."/>
            <person name="Henn M."/>
            <person name="Ma L.-J."/>
            <person name="Jaffe D.B."/>
            <person name="Butler J."/>
            <person name="Alvarez P."/>
            <person name="Gnerre S."/>
            <person name="Grabherr M."/>
            <person name="Kleber M."/>
            <person name="Mauceli E.W."/>
            <person name="Brockman W."/>
            <person name="Rounsley S."/>
            <person name="Young S.K."/>
            <person name="LaButti K."/>
            <person name="Pushparaj V."/>
            <person name="DeCaprio D."/>
            <person name="Crawford M."/>
            <person name="Koehrsen M."/>
            <person name="Engels R."/>
            <person name="Montgomery P."/>
            <person name="Pearson M."/>
            <person name="Howarth C."/>
            <person name="Larson L."/>
            <person name="Luoma S."/>
            <person name="White J."/>
            <person name="Alvarado L."/>
            <person name="Kodira C.D."/>
            <person name="Zeng Q."/>
            <person name="Oleary S."/>
            <person name="Yandava C."/>
            <person name="Denning D.W."/>
            <person name="Nierman W.C."/>
            <person name="Milne T."/>
            <person name="Madden K."/>
        </authorList>
    </citation>
    <scope>NUCLEOTIDE SEQUENCE [LARGE SCALE GENOMIC DNA]</scope>
    <source>
        <strain>NIH 2624 / FGSC A1156</strain>
    </source>
</reference>
<sequence>MSGDPRSFSFNQGDDHPIDSSQQPLHPTNTMADSYSDRNWGAPGGLDHTHSMRTQSTATPGMDNLGPAAVGGGISGIALGVANSHDRQSGVDAFRDTDGGNFPAERGYNAPGSDNPYVPPPPAAAYDSSDNLTARSGAYGSSAALAAAASAPAGASNTSRRSFVDSPYQGVGALDAGPYQRQSVYNNGDYPLVINPDEIIDDGDDGFALPNSKSAGHKSRAVPAAAAGAAGGAAAGGLLGGIFKSKAAAEGPSYGPVPGAGIEAAEKGQWAKPKPGTGSRKRGWIVGIILAVVIVGAIVGGAVGGTLGNREKESPSSSETASGDEKVNGDLGKDSDEIKSLMNNPNLHKVFPGMDYTPWGTQYPLCQKYPPSQNNVTRDIAVLSQLTNTVRLYGTDCNQTEMVLHAIDRLELTEMKLWLGVWIDTNKTTCERQLNQLYDVLDKTKDHSIFKGAIIGNEALYRAGSSIAEAEKTLISYMTEVRDHFKKNNINIPIATSDLGDNWNAELVKASDVVMANVHPFFAGVSVDLAASWTWDFWNNHNLVLTKGTDKKQIISEVGWPSGGGNDCGDGGNCPNDSAGSVAGIDEMNQFMSDWVCQALDNGTDYFWFEAFDEPWKIVYNTKNENWEDKWGLMDPARNLKDGLKIPDCGGKTAT</sequence>